<comment type="function">
    <text evidence="1">Component of the ribosome, a large ribonucleoprotein complex responsible for the synthesis of proteins in the cell. The small ribosomal subunit (SSU) binds messenger RNAs (mRNAs) and translates the encoded message by selecting cognate aminoacyl-transfer RNA (tRNA) molecules. The large subunit (LSU) contains the ribosomal catalytic site termed the peptidyl transferase center (PTC), which catalyzes the formation of peptide bonds, thereby polymerizing the amino acids delivered by tRNAs into a polypeptide chain. The nascent polypeptides leave the ribosome through a tunnel in the LSU and interact with protein factors that function in enzymatic processing, targeting, and the membrane insertion of nascent chains at the exit of the ribosomal tunnel. eL19 may play a role in the last stages of translation initiation, in particular subunit joining and shedding/releasing factors.</text>
</comment>
<comment type="subunit">
    <text evidence="1">Component of the large ribosomal subunit (LSU). Mature yeast ribosomes consist of a small (40S) and a large (60S) subunit. The 40S small subunit contains 1 molecule of ribosomal RNA (18S rRNA) and at least 33 different proteins. The large 60S subunit contains 3 rRNA molecules (25S, 5.8S and 5S rRNA) and at least 46 different proteins. eL19 lies in close proximity to the binding site for eukaryotic initiation factor eIF4G.</text>
</comment>
<comment type="subcellular location">
    <subcellularLocation>
        <location evidence="3">Cytoplasm</location>
    </subcellularLocation>
</comment>
<comment type="miscellaneous">
    <text>There are 2 genes for eL19 in S.pombe.</text>
</comment>
<comment type="similarity">
    <text evidence="6">Belongs to the eukaryotic ribosomal protein eL19 family.</text>
</comment>
<feature type="initiator methionine" description="Removed" evidence="4">
    <location>
        <position position="1"/>
    </location>
</feature>
<feature type="chain" id="PRO_0000131183" description="Large ribosomal subunit protein eL19A">
    <location>
        <begin position="2"/>
        <end position="193"/>
    </location>
</feature>
<feature type="region of interest" description="Disordered" evidence="2">
    <location>
        <begin position="156"/>
        <end position="179"/>
    </location>
</feature>
<feature type="compositionally biased region" description="Basic residues" evidence="2">
    <location>
        <begin position="164"/>
        <end position="174"/>
    </location>
</feature>
<feature type="sequence conflict" description="In Ref. 3; AA sequence." evidence="6" ref="3">
    <original>M</original>
    <variation>G</variation>
    <location>
        <position position="24"/>
    </location>
</feature>
<feature type="sequence conflict" description="In Ref. 3; AA sequence." evidence="6" ref="3">
    <original>S</original>
    <variation>G</variation>
    <location>
        <position position="30"/>
    </location>
</feature>
<feature type="helix" evidence="7">
    <location>
        <begin position="5"/>
        <end position="15"/>
    </location>
</feature>
<feature type="turn" evidence="7">
    <location>
        <begin position="19"/>
        <end position="21"/>
    </location>
</feature>
<feature type="strand" evidence="7">
    <location>
        <begin position="22"/>
        <end position="24"/>
    </location>
</feature>
<feature type="helix" evidence="7">
    <location>
        <begin position="29"/>
        <end position="34"/>
    </location>
</feature>
<feature type="helix" evidence="7">
    <location>
        <begin position="38"/>
        <end position="46"/>
    </location>
</feature>
<feature type="strand" evidence="7">
    <location>
        <begin position="49"/>
        <end position="52"/>
    </location>
</feature>
<feature type="helix" evidence="7">
    <location>
        <begin position="60"/>
        <end position="67"/>
    </location>
</feature>
<feature type="helix" evidence="7">
    <location>
        <begin position="91"/>
        <end position="111"/>
    </location>
</feature>
<feature type="helix" evidence="7">
    <location>
        <begin position="117"/>
        <end position="128"/>
    </location>
</feature>
<feature type="helix" evidence="7">
    <location>
        <begin position="135"/>
        <end position="144"/>
    </location>
</feature>
<name>RL19A_SCHPO</name>
<protein>
    <recommendedName>
        <fullName evidence="6">Large ribosomal subunit protein eL19A</fullName>
    </recommendedName>
    <alternativeName>
        <fullName>60S ribosomal protein L19-A</fullName>
    </alternativeName>
    <alternativeName>
        <fullName evidence="5">SP-L15</fullName>
    </alternativeName>
</protein>
<accession>P05734</accession>
<accession>O60194</accession>
<organism>
    <name type="scientific">Schizosaccharomyces pombe (strain 972 / ATCC 24843)</name>
    <name type="common">Fission yeast</name>
    <dbReference type="NCBI Taxonomy" id="284812"/>
    <lineage>
        <taxon>Eukaryota</taxon>
        <taxon>Fungi</taxon>
        <taxon>Dikarya</taxon>
        <taxon>Ascomycota</taxon>
        <taxon>Taphrinomycotina</taxon>
        <taxon>Schizosaccharomycetes</taxon>
        <taxon>Schizosaccharomycetales</taxon>
        <taxon>Schizosaccharomycetaceae</taxon>
        <taxon>Schizosaccharomyces</taxon>
    </lineage>
</organism>
<sequence>MANLRTQKRLAASVLKCGKRKVWMDPNEISEISNANSRQNVRKLIKDGLVIRKPNLMHSRFRIRKTHAAKRLGRHTGYGKRKGTAEARMPSAVVWMRRQRVLRRLLRKYRESGKIDKHLYHTLYLEAKGNTFKHKRALIEHIQRAKAEANRTKLIQEQQDARRARAKAARQRRAKAVEEKREQLYTAAEKIEE</sequence>
<keyword id="KW-0002">3D-structure</keyword>
<keyword id="KW-0963">Cytoplasm</keyword>
<keyword id="KW-0903">Direct protein sequencing</keyword>
<keyword id="KW-1185">Reference proteome</keyword>
<keyword id="KW-0687">Ribonucleoprotein</keyword>
<keyword id="KW-0689">Ribosomal protein</keyword>
<proteinExistence type="evidence at protein level"/>
<reference key="1">
    <citation type="submission" date="1998-06" db="EMBL/GenBank/DDBJ databases">
        <title>S.pombe ribosomal protein L19 homolog.</title>
        <authorList>
            <person name="Kawamukai M."/>
        </authorList>
    </citation>
    <scope>NUCLEOTIDE SEQUENCE [MRNA]</scope>
</reference>
<reference key="2">
    <citation type="journal article" date="2002" name="Nature">
        <title>The genome sequence of Schizosaccharomyces pombe.</title>
        <authorList>
            <person name="Wood V."/>
            <person name="Gwilliam R."/>
            <person name="Rajandream M.A."/>
            <person name="Lyne M.H."/>
            <person name="Lyne R."/>
            <person name="Stewart A."/>
            <person name="Sgouros J.G."/>
            <person name="Peat N."/>
            <person name="Hayles J."/>
            <person name="Baker S.G."/>
            <person name="Basham D."/>
            <person name="Bowman S."/>
            <person name="Brooks K."/>
            <person name="Brown D."/>
            <person name="Brown S."/>
            <person name="Chillingworth T."/>
            <person name="Churcher C.M."/>
            <person name="Collins M."/>
            <person name="Connor R."/>
            <person name="Cronin A."/>
            <person name="Davis P."/>
            <person name="Feltwell T."/>
            <person name="Fraser A."/>
            <person name="Gentles S."/>
            <person name="Goble A."/>
            <person name="Hamlin N."/>
            <person name="Harris D.E."/>
            <person name="Hidalgo J."/>
            <person name="Hodgson G."/>
            <person name="Holroyd S."/>
            <person name="Hornsby T."/>
            <person name="Howarth S."/>
            <person name="Huckle E.J."/>
            <person name="Hunt S."/>
            <person name="Jagels K."/>
            <person name="James K.D."/>
            <person name="Jones L."/>
            <person name="Jones M."/>
            <person name="Leather S."/>
            <person name="McDonald S."/>
            <person name="McLean J."/>
            <person name="Mooney P."/>
            <person name="Moule S."/>
            <person name="Mungall K.L."/>
            <person name="Murphy L.D."/>
            <person name="Niblett D."/>
            <person name="Odell C."/>
            <person name="Oliver K."/>
            <person name="O'Neil S."/>
            <person name="Pearson D."/>
            <person name="Quail M.A."/>
            <person name="Rabbinowitsch E."/>
            <person name="Rutherford K.M."/>
            <person name="Rutter S."/>
            <person name="Saunders D."/>
            <person name="Seeger K."/>
            <person name="Sharp S."/>
            <person name="Skelton J."/>
            <person name="Simmonds M.N."/>
            <person name="Squares R."/>
            <person name="Squares S."/>
            <person name="Stevens K."/>
            <person name="Taylor K."/>
            <person name="Taylor R.G."/>
            <person name="Tivey A."/>
            <person name="Walsh S.V."/>
            <person name="Warren T."/>
            <person name="Whitehead S."/>
            <person name="Woodward J.R."/>
            <person name="Volckaert G."/>
            <person name="Aert R."/>
            <person name="Robben J."/>
            <person name="Grymonprez B."/>
            <person name="Weltjens I."/>
            <person name="Vanstreels E."/>
            <person name="Rieger M."/>
            <person name="Schaefer M."/>
            <person name="Mueller-Auer S."/>
            <person name="Gabel C."/>
            <person name="Fuchs M."/>
            <person name="Duesterhoeft A."/>
            <person name="Fritzc C."/>
            <person name="Holzer E."/>
            <person name="Moestl D."/>
            <person name="Hilbert H."/>
            <person name="Borzym K."/>
            <person name="Langer I."/>
            <person name="Beck A."/>
            <person name="Lehrach H."/>
            <person name="Reinhardt R."/>
            <person name="Pohl T.M."/>
            <person name="Eger P."/>
            <person name="Zimmermann W."/>
            <person name="Wedler H."/>
            <person name="Wambutt R."/>
            <person name="Purnelle B."/>
            <person name="Goffeau A."/>
            <person name="Cadieu E."/>
            <person name="Dreano S."/>
            <person name="Gloux S."/>
            <person name="Lelaure V."/>
            <person name="Mottier S."/>
            <person name="Galibert F."/>
            <person name="Aves S.J."/>
            <person name="Xiang Z."/>
            <person name="Hunt C."/>
            <person name="Moore K."/>
            <person name="Hurst S.M."/>
            <person name="Lucas M."/>
            <person name="Rochet M."/>
            <person name="Gaillardin C."/>
            <person name="Tallada V.A."/>
            <person name="Garzon A."/>
            <person name="Thode G."/>
            <person name="Daga R.R."/>
            <person name="Cruzado L."/>
            <person name="Jimenez J."/>
            <person name="Sanchez M."/>
            <person name="del Rey F."/>
            <person name="Benito J."/>
            <person name="Dominguez A."/>
            <person name="Revuelta J.L."/>
            <person name="Moreno S."/>
            <person name="Armstrong J."/>
            <person name="Forsburg S.L."/>
            <person name="Cerutti L."/>
            <person name="Lowe T."/>
            <person name="McCombie W.R."/>
            <person name="Paulsen I."/>
            <person name="Potashkin J."/>
            <person name="Shpakovski G.V."/>
            <person name="Ussery D."/>
            <person name="Barrell B.G."/>
            <person name="Nurse P."/>
        </authorList>
    </citation>
    <scope>NUCLEOTIDE SEQUENCE [LARGE SCALE GENOMIC DNA]</scope>
    <source>
        <strain>972 / ATCC 24843</strain>
    </source>
</reference>
<reference key="3">
    <citation type="journal article" date="1983" name="Mol. Gen. Genet.">
        <title>Yeast ribosomal proteins: VII. Cytoplasmic ribosomal proteins from Schizosaccharomyces pombe.</title>
        <authorList>
            <person name="Otaka E."/>
            <person name="Higo K."/>
            <person name="Itoh T."/>
        </authorList>
    </citation>
    <scope>PROTEIN SEQUENCE OF 2-30</scope>
</reference>
<reference key="4">
    <citation type="journal article" date="2006" name="Nat. Biotechnol.">
        <title>ORFeome cloning and global analysis of protein localization in the fission yeast Schizosaccharomyces pombe.</title>
        <authorList>
            <person name="Matsuyama A."/>
            <person name="Arai R."/>
            <person name="Yashiroda Y."/>
            <person name="Shirai A."/>
            <person name="Kamata A."/>
            <person name="Sekido S."/>
            <person name="Kobayashi Y."/>
            <person name="Hashimoto A."/>
            <person name="Hamamoto M."/>
            <person name="Hiraoka Y."/>
            <person name="Horinouchi S."/>
            <person name="Yoshida M."/>
        </authorList>
    </citation>
    <scope>SUBCELLULAR LOCATION [LARGE SCALE ANALYSIS]</scope>
</reference>
<gene>
    <name type="primary">rpl1901</name>
    <name type="synonym">rpl19</name>
    <name type="synonym">rpl19-1</name>
    <name type="synonym">rpl19a</name>
    <name type="ORF">SPBC56F2.02</name>
</gene>
<evidence type="ECO:0000250" key="1">
    <source>
        <dbReference type="UniProtKB" id="P0CX82"/>
    </source>
</evidence>
<evidence type="ECO:0000256" key="2">
    <source>
        <dbReference type="SAM" id="MobiDB-lite"/>
    </source>
</evidence>
<evidence type="ECO:0000269" key="3">
    <source>
    </source>
</evidence>
<evidence type="ECO:0000269" key="4">
    <source>
    </source>
</evidence>
<evidence type="ECO:0000303" key="5">
    <source>
    </source>
</evidence>
<evidence type="ECO:0000305" key="6"/>
<evidence type="ECO:0007829" key="7">
    <source>
        <dbReference type="PDB" id="8ETC"/>
    </source>
</evidence>
<dbReference type="EMBL" id="AB015169">
    <property type="protein sequence ID" value="BAA28752.1"/>
    <property type="molecule type" value="mRNA"/>
</dbReference>
<dbReference type="EMBL" id="CU329671">
    <property type="protein sequence ID" value="CAA18881.1"/>
    <property type="molecule type" value="Genomic_DNA"/>
</dbReference>
<dbReference type="PIR" id="S10050">
    <property type="entry name" value="S10050"/>
</dbReference>
<dbReference type="PIR" id="T40542">
    <property type="entry name" value="T40542"/>
</dbReference>
<dbReference type="RefSeq" id="NP_596715.1">
    <property type="nucleotide sequence ID" value="NM_001022640.2"/>
</dbReference>
<dbReference type="PDB" id="8ESQ">
    <property type="method" value="EM"/>
    <property type="resolution" value="2.80 A"/>
    <property type="chains" value="R=1-193"/>
</dbReference>
<dbReference type="PDB" id="8ESR">
    <property type="method" value="EM"/>
    <property type="resolution" value="3.20 A"/>
    <property type="chains" value="R=1-193"/>
</dbReference>
<dbReference type="PDB" id="8ETC">
    <property type="method" value="EM"/>
    <property type="resolution" value="3.10 A"/>
    <property type="chains" value="R=1-193"/>
</dbReference>
<dbReference type="PDB" id="8ETG">
    <property type="method" value="EM"/>
    <property type="resolution" value="3.40 A"/>
    <property type="chains" value="R=1-193"/>
</dbReference>
<dbReference type="PDB" id="8ETJ">
    <property type="method" value="EM"/>
    <property type="resolution" value="3.20 A"/>
    <property type="chains" value="R=1-193"/>
</dbReference>
<dbReference type="PDB" id="8EUG">
    <property type="method" value="EM"/>
    <property type="resolution" value="2.80 A"/>
    <property type="chains" value="R=1-193"/>
</dbReference>
<dbReference type="PDB" id="8EUI">
    <property type="method" value="EM"/>
    <property type="resolution" value="3.10 A"/>
    <property type="chains" value="R=1-193"/>
</dbReference>
<dbReference type="PDBsum" id="8ESQ"/>
<dbReference type="PDBsum" id="8ESR"/>
<dbReference type="PDBsum" id="8ETC"/>
<dbReference type="PDBsum" id="8ETG"/>
<dbReference type="PDBsum" id="8ETJ"/>
<dbReference type="PDBsum" id="8EUG"/>
<dbReference type="PDBsum" id="8EUI"/>
<dbReference type="SMR" id="P05734"/>
<dbReference type="BioGRID" id="277387">
    <property type="interactions" value="7"/>
</dbReference>
<dbReference type="FunCoup" id="P05734">
    <property type="interactions" value="527"/>
</dbReference>
<dbReference type="STRING" id="284812.P05734"/>
<dbReference type="iPTMnet" id="P05734"/>
<dbReference type="PaxDb" id="4896-SPBC56F2.02.1"/>
<dbReference type="EnsemblFungi" id="SPBC56F2.02.1">
    <property type="protein sequence ID" value="SPBC56F2.02.1:pep"/>
    <property type="gene ID" value="SPBC56F2.02"/>
</dbReference>
<dbReference type="GeneID" id="2540870"/>
<dbReference type="KEGG" id="spo:2540870"/>
<dbReference type="PomBase" id="SPBC56F2.02">
    <property type="gene designation" value="rpl1901"/>
</dbReference>
<dbReference type="VEuPathDB" id="FungiDB:SPBC56F2.02"/>
<dbReference type="eggNOG" id="KOG1696">
    <property type="taxonomic scope" value="Eukaryota"/>
</dbReference>
<dbReference type="HOGENOM" id="CLU_083919_0_1_1"/>
<dbReference type="InParanoid" id="P05734"/>
<dbReference type="OMA" id="WMLRIRA"/>
<dbReference type="PhylomeDB" id="P05734"/>
<dbReference type="PRO" id="PR:P05734"/>
<dbReference type="Proteomes" id="UP000002485">
    <property type="component" value="Chromosome II"/>
</dbReference>
<dbReference type="GO" id="GO:0005829">
    <property type="term" value="C:cytosol"/>
    <property type="evidence" value="ECO:0007005"/>
    <property type="project" value="PomBase"/>
</dbReference>
<dbReference type="GO" id="GO:0022625">
    <property type="term" value="C:cytosolic large ribosomal subunit"/>
    <property type="evidence" value="ECO:0000318"/>
    <property type="project" value="GO_Central"/>
</dbReference>
<dbReference type="GO" id="GO:0030684">
    <property type="term" value="C:preribosome"/>
    <property type="evidence" value="ECO:0000314"/>
    <property type="project" value="PomBase"/>
</dbReference>
<dbReference type="GO" id="GO:0003723">
    <property type="term" value="F:RNA binding"/>
    <property type="evidence" value="ECO:0000318"/>
    <property type="project" value="GO_Central"/>
</dbReference>
<dbReference type="GO" id="GO:0003735">
    <property type="term" value="F:structural constituent of ribosome"/>
    <property type="evidence" value="ECO:0000318"/>
    <property type="project" value="GO_Central"/>
</dbReference>
<dbReference type="GO" id="GO:0002181">
    <property type="term" value="P:cytoplasmic translation"/>
    <property type="evidence" value="ECO:0000266"/>
    <property type="project" value="PomBase"/>
</dbReference>
<dbReference type="CDD" id="cd01417">
    <property type="entry name" value="Ribosomal_L19e_E"/>
    <property type="match status" value="1"/>
</dbReference>
<dbReference type="FunFam" id="1.10.1200.240:FF:000001">
    <property type="entry name" value="Ribosomal protein L19"/>
    <property type="match status" value="1"/>
</dbReference>
<dbReference type="FunFam" id="1.10.1650.10:FF:000001">
    <property type="entry name" value="Ribosomal protein L19"/>
    <property type="match status" value="1"/>
</dbReference>
<dbReference type="Gene3D" id="1.10.1200.240">
    <property type="match status" value="1"/>
</dbReference>
<dbReference type="Gene3D" id="1.10.1650.10">
    <property type="match status" value="1"/>
</dbReference>
<dbReference type="HAMAP" id="MF_01475">
    <property type="entry name" value="Ribosomal_eL19"/>
    <property type="match status" value="1"/>
</dbReference>
<dbReference type="InterPro" id="IPR035970">
    <property type="entry name" value="60S_ribosomal_eL19_sf"/>
</dbReference>
<dbReference type="InterPro" id="IPR039547">
    <property type="entry name" value="Ribosomal_eL19"/>
</dbReference>
<dbReference type="InterPro" id="IPR000196">
    <property type="entry name" value="Ribosomal_eL19_dom"/>
</dbReference>
<dbReference type="InterPro" id="IPR015972">
    <property type="entry name" value="Ribosomal_eL19_dom1"/>
</dbReference>
<dbReference type="InterPro" id="IPR033935">
    <property type="entry name" value="Ribosomal_eL19_euk"/>
</dbReference>
<dbReference type="NCBIfam" id="NF006343">
    <property type="entry name" value="PRK08570.1"/>
    <property type="match status" value="1"/>
</dbReference>
<dbReference type="PANTHER" id="PTHR10722">
    <property type="entry name" value="60S RIBOSOMAL PROTEIN L19"/>
    <property type="match status" value="1"/>
</dbReference>
<dbReference type="Pfam" id="PF01280">
    <property type="entry name" value="Ribosomal_L19e"/>
    <property type="match status" value="1"/>
</dbReference>
<dbReference type="Pfam" id="PF25476">
    <property type="entry name" value="Ribosomal_L19e_C"/>
    <property type="match status" value="1"/>
</dbReference>
<dbReference type="SMART" id="SM01416">
    <property type="entry name" value="Ribosomal_L19e"/>
    <property type="match status" value="1"/>
</dbReference>
<dbReference type="SUPFAM" id="SSF48140">
    <property type="entry name" value="Ribosomal protein L19 (L19e)"/>
    <property type="match status" value="1"/>
</dbReference>